<dbReference type="EMBL" id="AJ005567">
    <property type="protein sequence ID" value="CAA06596.1"/>
    <property type="molecule type" value="Genomic_DNA"/>
</dbReference>
<dbReference type="EMBL" id="AY158993">
    <property type="protein sequence ID" value="AAN86830.1"/>
    <property type="molecule type" value="mRNA"/>
</dbReference>
<dbReference type="CCDS" id="CCDS38511.1"/>
<dbReference type="RefSeq" id="NP_035605.1">
    <property type="nucleotide sequence ID" value="NM_011475.4"/>
</dbReference>
<dbReference type="SMR" id="O70560"/>
<dbReference type="FunCoup" id="O70560">
    <property type="interactions" value="3"/>
</dbReference>
<dbReference type="STRING" id="10090.ENSMUSP00000043513"/>
<dbReference type="PaxDb" id="10090-ENSMUSP00000043513"/>
<dbReference type="ProteomicsDB" id="257327"/>
<dbReference type="DNASU" id="20763"/>
<dbReference type="Ensembl" id="ENSMUST00000047264.3">
    <property type="protein sequence ID" value="ENSMUSP00000043513.3"/>
    <property type="gene ID" value="ENSMUSG00000042157.3"/>
</dbReference>
<dbReference type="GeneID" id="20763"/>
<dbReference type="KEGG" id="mmu:20763"/>
<dbReference type="UCSC" id="uc008qdy.1">
    <property type="organism name" value="mouse"/>
</dbReference>
<dbReference type="AGR" id="MGI:1330309"/>
<dbReference type="CTD" id="20763"/>
<dbReference type="MGI" id="MGI:1330309">
    <property type="gene designation" value="Sprr2i"/>
</dbReference>
<dbReference type="VEuPathDB" id="HostDB:ENSMUSG00000042157"/>
<dbReference type="GeneTree" id="ENSGT01120000272670"/>
<dbReference type="HOGENOM" id="CLU_192372_0_0_1"/>
<dbReference type="InParanoid" id="O70560"/>
<dbReference type="OMA" id="PPVKCPQ"/>
<dbReference type="BioGRID-ORCS" id="20763">
    <property type="hits" value="2 hits in 42 CRISPR screens"/>
</dbReference>
<dbReference type="PRO" id="PR:O70560"/>
<dbReference type="Proteomes" id="UP000000589">
    <property type="component" value="Chromosome 3"/>
</dbReference>
<dbReference type="RNAct" id="O70560">
    <property type="molecule type" value="protein"/>
</dbReference>
<dbReference type="Bgee" id="ENSMUSG00000042157">
    <property type="expression patterns" value="Expressed in uterine cervix and 7 other cell types or tissues"/>
</dbReference>
<dbReference type="GO" id="GO:0001533">
    <property type="term" value="C:cornified envelope"/>
    <property type="evidence" value="ECO:0000303"/>
    <property type="project" value="UniProtKB"/>
</dbReference>
<dbReference type="GO" id="GO:0005737">
    <property type="term" value="C:cytoplasm"/>
    <property type="evidence" value="ECO:0007669"/>
    <property type="project" value="UniProtKB-SubCell"/>
</dbReference>
<dbReference type="GO" id="GO:0008544">
    <property type="term" value="P:epidermis development"/>
    <property type="evidence" value="ECO:0000303"/>
    <property type="project" value="UniProtKB"/>
</dbReference>
<dbReference type="GO" id="GO:0031424">
    <property type="term" value="P:keratinization"/>
    <property type="evidence" value="ECO:0007669"/>
    <property type="project" value="UniProtKB-KW"/>
</dbReference>
<dbReference type="GO" id="GO:0030216">
    <property type="term" value="P:keratinocyte differentiation"/>
    <property type="evidence" value="ECO:0000303"/>
    <property type="project" value="UniProtKB"/>
</dbReference>
<dbReference type="InterPro" id="IPR029142">
    <property type="entry name" value="SPRR2"/>
</dbReference>
<dbReference type="Pfam" id="PF14820">
    <property type="entry name" value="SPRR2"/>
    <property type="match status" value="1"/>
</dbReference>
<dbReference type="PRINTS" id="PR00021">
    <property type="entry name" value="PRORICH"/>
</dbReference>
<feature type="chain" id="PRO_0000150021" description="Small proline-rich protein 2I">
    <location>
        <begin position="1"/>
        <end position="76"/>
    </location>
</feature>
<feature type="repeat" description="1">
    <location>
        <begin position="21"/>
        <end position="29"/>
    </location>
</feature>
<feature type="repeat" description="2">
    <location>
        <begin position="30"/>
        <end position="38"/>
    </location>
</feature>
<feature type="repeat" description="3">
    <location>
        <begin position="39"/>
        <end position="47"/>
    </location>
</feature>
<feature type="region of interest" description="3 X 9 AA approximate tandem repeats">
    <location>
        <begin position="21"/>
        <end position="47"/>
    </location>
</feature>
<feature type="region of interest" description="Disordered" evidence="2">
    <location>
        <begin position="40"/>
        <end position="76"/>
    </location>
</feature>
<feature type="compositionally biased region" description="Pro residues" evidence="2">
    <location>
        <begin position="40"/>
        <end position="53"/>
    </location>
</feature>
<gene>
    <name type="primary">Sprr2i</name>
</gene>
<proteinExistence type="evidence at transcript level"/>
<keyword id="KW-0963">Cytoplasm</keyword>
<keyword id="KW-0417">Keratinization</keyword>
<keyword id="KW-1185">Reference proteome</keyword>
<keyword id="KW-0677">Repeat</keyword>
<name>SPR2I_MOUSE</name>
<organism>
    <name type="scientific">Mus musculus</name>
    <name type="common">Mouse</name>
    <dbReference type="NCBI Taxonomy" id="10090"/>
    <lineage>
        <taxon>Eukaryota</taxon>
        <taxon>Metazoa</taxon>
        <taxon>Chordata</taxon>
        <taxon>Craniata</taxon>
        <taxon>Vertebrata</taxon>
        <taxon>Euteleostomi</taxon>
        <taxon>Mammalia</taxon>
        <taxon>Eutheria</taxon>
        <taxon>Euarchontoglires</taxon>
        <taxon>Glires</taxon>
        <taxon>Rodentia</taxon>
        <taxon>Myomorpha</taxon>
        <taxon>Muroidea</taxon>
        <taxon>Muridae</taxon>
        <taxon>Murinae</taxon>
        <taxon>Mus</taxon>
        <taxon>Mus</taxon>
    </lineage>
</organism>
<accession>O70560</accession>
<reference key="1">
    <citation type="journal article" date="1999" name="Genomics">
        <title>Mouse Sprr2 genes: a clustered family of genes showing differential expression in epithelial tissues.</title>
        <authorList>
            <person name="Song H.J."/>
            <person name="Poy G."/>
            <person name="Darwiche N."/>
            <person name="Lichti U."/>
            <person name="Kuroki T."/>
            <person name="Steinert P.M."/>
            <person name="Kartasova T."/>
        </authorList>
    </citation>
    <scope>NUCLEOTIDE SEQUENCE [GENOMIC DNA]</scope>
    <source>
        <strain>129/SvJ</strain>
    </source>
</reference>
<reference key="2">
    <citation type="submission" date="2001-06" db="EMBL/GenBank/DDBJ databases">
        <authorList>
            <person name="Kartasova T."/>
        </authorList>
    </citation>
    <scope>NUCLEOTIDE SEQUENCE [GENOMIC DNA]</scope>
    <source>
        <strain>129/SvJ</strain>
    </source>
</reference>
<reference key="3">
    <citation type="journal article" date="2003" name="Mamm. Genome">
        <title>Mouse Sprr locus: a tandem array of coordinately regulated genes.</title>
        <authorList>
            <person name="Patel S."/>
            <person name="Kartasova T."/>
            <person name="Segre J.A."/>
        </authorList>
    </citation>
    <scope>NUCLEOTIDE SEQUENCE [MRNA]</scope>
    <source>
        <strain>C57BL/6J</strain>
    </source>
</reference>
<reference key="4">
    <citation type="journal article" date="2004" name="Mol. Cells">
        <title>Estrogen regulates the expression of the small proline-rich 2 gene family in the mouse uterus.</title>
        <authorList>
            <person name="Hong S.H."/>
            <person name="Nah H.Y."/>
            <person name="Lee J.Y."/>
            <person name="Lee Y.J."/>
            <person name="Lee J.W."/>
            <person name="Gye M.C."/>
            <person name="Kim C.H."/>
            <person name="Kang B.M."/>
            <person name="Kim M.K."/>
        </authorList>
    </citation>
    <scope>TISSUE SPECIFICITY</scope>
</reference>
<evidence type="ECO:0000250" key="1"/>
<evidence type="ECO:0000256" key="2">
    <source>
        <dbReference type="SAM" id="MobiDB-lite"/>
    </source>
</evidence>
<evidence type="ECO:0000269" key="3">
    <source>
    </source>
</evidence>
<evidence type="ECO:0000305" key="4"/>
<sequence length="76" mass="8356">MSYQQQQCKQPCQPPPVCPPKKCPEPCPPPQCPEPCPPPKCPEPCPESCPPPSYQQKCPPVQPPPPCQQKCPPKSK</sequence>
<comment type="function">
    <text evidence="1">Cross-linked envelope protein of keratinocytes. It is a keratinocyte protein that first appears in the cell cytosol, but ultimately becomes cross-linked to membrane proteins by transglutaminase. All that results in the formation of an insoluble envelope beneath the plasma membrane (By similarity).</text>
</comment>
<comment type="subcellular location">
    <subcellularLocation>
        <location evidence="1">Cytoplasm</location>
    </subcellularLocation>
</comment>
<comment type="tissue specificity">
    <text evidence="3">Not expressed in uterus.</text>
</comment>
<comment type="similarity">
    <text evidence="4">Belongs to the cornifin (SPRR) family.</text>
</comment>
<protein>
    <recommendedName>
        <fullName>Small proline-rich protein 2I</fullName>
    </recommendedName>
</protein>